<evidence type="ECO:0000250" key="1"/>
<evidence type="ECO:0000255" key="2"/>
<evidence type="ECO:0000305" key="3"/>
<accession>Q6L3X3</accession>
<organism>
    <name type="scientific">Solanum demissum</name>
    <name type="common">Wild potato</name>
    <dbReference type="NCBI Taxonomy" id="50514"/>
    <lineage>
        <taxon>Eukaryota</taxon>
        <taxon>Viridiplantae</taxon>
        <taxon>Streptophyta</taxon>
        <taxon>Embryophyta</taxon>
        <taxon>Tracheophyta</taxon>
        <taxon>Spermatophyta</taxon>
        <taxon>Magnoliopsida</taxon>
        <taxon>eudicotyledons</taxon>
        <taxon>Gunneridae</taxon>
        <taxon>Pentapetalae</taxon>
        <taxon>asterids</taxon>
        <taxon>lamiids</taxon>
        <taxon>Solanales</taxon>
        <taxon>Solanaceae</taxon>
        <taxon>Solanoideae</taxon>
        <taxon>Solaneae</taxon>
        <taxon>Solanum</taxon>
    </lineage>
</organism>
<reference key="1">
    <citation type="journal article" date="2005" name="Plant J.">
        <title>The R1 resistance gene cluster contains three groups of independently evolving, type I R1 homologues and shows substantial structural variation among haplotypes of Solanum demissum.</title>
        <authorList>
            <person name="Kuang H."/>
            <person name="Wei F."/>
            <person name="Marano M.R."/>
            <person name="Wirtz U."/>
            <person name="Wang X."/>
            <person name="Liu J."/>
            <person name="Shum W.P."/>
            <person name="Zaborsky J."/>
            <person name="Tallon L.J."/>
            <person name="Rensink W."/>
            <person name="Lobst S."/>
            <person name="Zhang P."/>
            <person name="Tornqvist C.-E."/>
            <person name="Tek A."/>
            <person name="Bamberg J."/>
            <person name="Helgeson J."/>
            <person name="Fry W."/>
            <person name="You F."/>
            <person name="Luo M.-C."/>
            <person name="Jiang J."/>
            <person name="Buell C.R."/>
            <person name="Baker B."/>
        </authorList>
    </citation>
    <scope>NUCLEOTIDE SEQUENCE [GENOMIC DNA]</scope>
</reference>
<protein>
    <recommendedName>
        <fullName>Putative late blight resistance protein homolog R1B-8</fullName>
    </recommendedName>
</protein>
<proteinExistence type="uncertain"/>
<name>R1B8_SOLDE</name>
<comment type="function">
    <text>Confers resistance to late blight (Phytophthora infestans) races carrying the avirulence gene Avr1. Resistance proteins guard the plant against pathogens that contain an appropriate avirulence protein via an indirect interaction with this avirulence protein. That triggers a defense system including the hypersensitive response, which restricts the pathogen growth.</text>
</comment>
<comment type="subcellular location">
    <subcellularLocation>
        <location evidence="1">Cytoplasm</location>
    </subcellularLocation>
    <subcellularLocation>
        <location evidence="1">Membrane</location>
        <topology evidence="1">Peripheral membrane protein</topology>
    </subcellularLocation>
</comment>
<comment type="miscellaneous">
    <text>This protein is encoded by the haplotype B genome of the allohexaploid Solanum demissum.</text>
</comment>
<comment type="similarity">
    <text evidence="3">Belongs to the disease resistance NB-LRR family.</text>
</comment>
<comment type="caution">
    <text evidence="3">Could be the product of a pseudogene.</text>
</comment>
<feature type="chain" id="PRO_0000233964" description="Putative late blight resistance protein homolog R1B-8">
    <location>
        <begin position="1"/>
        <end position="1202"/>
    </location>
</feature>
<feature type="domain" description="NB-ARC">
    <location>
        <begin position="426"/>
        <end position="741"/>
    </location>
</feature>
<feature type="repeat" description="LRR 1">
    <location>
        <begin position="865"/>
        <end position="889"/>
    </location>
</feature>
<feature type="repeat" description="LRR 2">
    <location>
        <begin position="908"/>
        <end position="936"/>
    </location>
</feature>
<feature type="repeat" description="LRR 3">
    <location>
        <begin position="1011"/>
        <end position="1036"/>
    </location>
</feature>
<feature type="repeat" description="LRR 4">
    <location>
        <begin position="1040"/>
        <end position="1059"/>
    </location>
</feature>
<feature type="repeat" description="LRR 5">
    <location>
        <begin position="1060"/>
        <end position="1084"/>
    </location>
</feature>
<feature type="repeat" description="LRR 6">
    <location>
        <begin position="1086"/>
        <end position="1111"/>
    </location>
</feature>
<feature type="repeat" description="LRR 7">
    <location>
        <begin position="1128"/>
        <end position="1151"/>
    </location>
</feature>
<feature type="coiled-coil region" evidence="2">
    <location>
        <begin position="345"/>
        <end position="368"/>
    </location>
</feature>
<feature type="coiled-coil region" evidence="2">
    <location>
        <begin position="437"/>
        <end position="459"/>
    </location>
</feature>
<feature type="binding site" evidence="2">
    <location>
        <begin position="471"/>
        <end position="478"/>
    </location>
    <ligand>
        <name>ATP</name>
        <dbReference type="ChEBI" id="CHEBI:30616"/>
    </ligand>
</feature>
<keyword id="KW-0067">ATP-binding</keyword>
<keyword id="KW-0175">Coiled coil</keyword>
<keyword id="KW-0963">Cytoplasm</keyword>
<keyword id="KW-0381">Hypersensitive response</keyword>
<keyword id="KW-0433">Leucine-rich repeat</keyword>
<keyword id="KW-0472">Membrane</keyword>
<keyword id="KW-0547">Nucleotide-binding</keyword>
<keyword id="KW-0611">Plant defense</keyword>
<keyword id="KW-0677">Repeat</keyword>
<sequence length="1202" mass="139403">MIEFWRSEYTRILSICPDPGKKYRNKNVRMWSLYLERVREVIWKTKQEFKAEYSFPKTSLAANKVDDVSPKFVMEVMDVFVENLNVLMKINDPCLWLFVPGHMKEQIEQVLKELKLLRFFVCFVSSKCIEPQYRRTTFYTHALIEASHNAMVVWLHLPVYGNKNQDLAPTEVSRLLSDFMEMKIKSIQPGNSIYIDVLQALKSTIPQAQQKHAAESGIVEIPIHSLTVGLSDQMANLQEMICLLRDNLIHLPILDLEFHLQDMDSVILDAGLLIYSFYDIKGEKEDTMLEDINRALGFDLPRNIEPIKAMVYLVMQKAFQCNLPRVHGLGYVDFLLKNLKDFQGRYSDSLAFLKNQLQVIQTEFESLQPFLKVVAEEPHNKLKTLNEDCATQIIRKSYEDIIEEITCIKAKIQEKNTVEDTMKTVIARTSSQLARTLRMNEEIVGFEDVIEKLRNRLLNRTKGQDVISIHGMPGLGKTTLANRLYSDMSVVSQFDICARCCVSQVYSYKDLLLSLIRDAIGENSDQHRELIRDAIGENSDQHRELCANELADKLRKTLLRRRYLILVDDVWENSVWDDLRGWFPDANNRSRIILMTRHHEVAKYASVHGDPLHLRMLDEDESWKLLEKKVFGEQSCSSPLLKNVGLRIAKMCGQLPLSIVLVAGILSEMEKEVECWEQVANNLGSHIHNDSRAIVDQSYHVLPCHLKSCFLYFGAFLEDRVIDISRLIGLWISESFIKSCEGRRLEYIAEGYLENLIGRNLVMVTQRAISDGKVKACRLHDVLLDFCKKRAAEENFLLWINRDQSTKAVYSHKQHAHLAFTEMDNLVEWSASCSLVGSVLFKSYDPYFRPLSSHAFAISHILLNFKFLKVLDLEHQVIIDFIPTELFYLRYLSAHIDQNSIPSSISNLWNLETLILKSRSASKHNRVLLPSTVWDMVKLRHLHIPYFSTEDEEALLENSAKLYDLETLSSPYFSRVEDAELMLRRTPNLRKLICEVQCLESPHQYHVLNFPIRLEILKLYNRSKAFKTIPFCISAPNLKYLKLSRFYLDSQYLSETADHLKHLEVLKLSCVEFGDHGEWEVSNGMFPQLKILKLEYVSLMKWIVADDVFPNLEQLVLRGCRHLMEIPSCFMDILSLKYIKVDEYSESVVQSARKIQETQIEEYQNNNFKLVIIKVHYREKLNELFSLLSLTVLGLVLHPIFL</sequence>
<gene>
    <name type="primary">R1B-8</name>
    <name type="ORF">PGEC747E24.10</name>
</gene>
<dbReference type="EMBL" id="AC149267">
    <property type="protein sequence ID" value="AAT38800.1"/>
    <property type="molecule type" value="Genomic_DNA"/>
</dbReference>
<dbReference type="SMR" id="Q6L3X3"/>
<dbReference type="GO" id="GO:0005737">
    <property type="term" value="C:cytoplasm"/>
    <property type="evidence" value="ECO:0007669"/>
    <property type="project" value="UniProtKB-SubCell"/>
</dbReference>
<dbReference type="GO" id="GO:0016020">
    <property type="term" value="C:membrane"/>
    <property type="evidence" value="ECO:0007669"/>
    <property type="project" value="UniProtKB-SubCell"/>
</dbReference>
<dbReference type="GO" id="GO:0043531">
    <property type="term" value="F:ADP binding"/>
    <property type="evidence" value="ECO:0007669"/>
    <property type="project" value="InterPro"/>
</dbReference>
<dbReference type="GO" id="GO:0005524">
    <property type="term" value="F:ATP binding"/>
    <property type="evidence" value="ECO:0007669"/>
    <property type="project" value="UniProtKB-KW"/>
</dbReference>
<dbReference type="GO" id="GO:0009626">
    <property type="term" value="P:plant-type hypersensitive response"/>
    <property type="evidence" value="ECO:0007669"/>
    <property type="project" value="UniProtKB-KW"/>
</dbReference>
<dbReference type="CDD" id="cd14798">
    <property type="entry name" value="RX-CC_like"/>
    <property type="match status" value="1"/>
</dbReference>
<dbReference type="FunFam" id="3.40.50.300:FF:001091">
    <property type="entry name" value="Probable disease resistance protein At1g61300"/>
    <property type="match status" value="1"/>
</dbReference>
<dbReference type="FunFam" id="1.10.10.10:FF:000322">
    <property type="entry name" value="Probable disease resistance protein At1g63360"/>
    <property type="match status" value="1"/>
</dbReference>
<dbReference type="Gene3D" id="1.10.8.430">
    <property type="entry name" value="Helical domain of apoptotic protease-activating factors"/>
    <property type="match status" value="1"/>
</dbReference>
<dbReference type="Gene3D" id="3.40.50.300">
    <property type="entry name" value="P-loop containing nucleotide triphosphate hydrolases"/>
    <property type="match status" value="1"/>
</dbReference>
<dbReference type="Gene3D" id="3.80.10.10">
    <property type="entry name" value="Ribonuclease Inhibitor"/>
    <property type="match status" value="1"/>
</dbReference>
<dbReference type="Gene3D" id="1.10.10.10">
    <property type="entry name" value="Winged helix-like DNA-binding domain superfamily/Winged helix DNA-binding domain"/>
    <property type="match status" value="1"/>
</dbReference>
<dbReference type="InterPro" id="IPR042197">
    <property type="entry name" value="Apaf_helical"/>
</dbReference>
<dbReference type="InterPro" id="IPR044974">
    <property type="entry name" value="Disease_R_plants"/>
</dbReference>
<dbReference type="InterPro" id="IPR032675">
    <property type="entry name" value="LRR_dom_sf"/>
</dbReference>
<dbReference type="InterPro" id="IPR002182">
    <property type="entry name" value="NB-ARC"/>
</dbReference>
<dbReference type="InterPro" id="IPR027417">
    <property type="entry name" value="P-loop_NTPase"/>
</dbReference>
<dbReference type="InterPro" id="IPR021929">
    <property type="entry name" value="R1A-like_N"/>
</dbReference>
<dbReference type="InterPro" id="IPR038005">
    <property type="entry name" value="RX-like_CC"/>
</dbReference>
<dbReference type="InterPro" id="IPR036388">
    <property type="entry name" value="WH-like_DNA-bd_sf"/>
</dbReference>
<dbReference type="PANTHER" id="PTHR23155:SF1152">
    <property type="entry name" value="AAA+ ATPASE DOMAIN-CONTAINING PROTEIN"/>
    <property type="match status" value="1"/>
</dbReference>
<dbReference type="PANTHER" id="PTHR23155">
    <property type="entry name" value="DISEASE RESISTANCE PROTEIN RP"/>
    <property type="match status" value="1"/>
</dbReference>
<dbReference type="Pfam" id="PF00931">
    <property type="entry name" value="NB-ARC"/>
    <property type="match status" value="1"/>
</dbReference>
<dbReference type="Pfam" id="PF12061">
    <property type="entry name" value="NB-LRR"/>
    <property type="match status" value="1"/>
</dbReference>
<dbReference type="Pfam" id="PF23559">
    <property type="entry name" value="WH_DRP"/>
    <property type="match status" value="1"/>
</dbReference>
<dbReference type="PRINTS" id="PR00364">
    <property type="entry name" value="DISEASERSIST"/>
</dbReference>
<dbReference type="SUPFAM" id="SSF52540">
    <property type="entry name" value="P-loop containing nucleoside triphosphate hydrolases"/>
    <property type="match status" value="1"/>
</dbReference>
<dbReference type="SUPFAM" id="SSF52047">
    <property type="entry name" value="RNI-like"/>
    <property type="match status" value="1"/>
</dbReference>